<evidence type="ECO:0000250" key="1">
    <source>
        <dbReference type="UniProtKB" id="P02545"/>
    </source>
</evidence>
<evidence type="ECO:0000250" key="2">
    <source>
        <dbReference type="UniProtKB" id="P14733"/>
    </source>
</evidence>
<evidence type="ECO:0000250" key="3">
    <source>
        <dbReference type="UniProtKB" id="P21619"/>
    </source>
</evidence>
<evidence type="ECO:0000250" key="4">
    <source>
        <dbReference type="UniProtKB" id="P70615"/>
    </source>
</evidence>
<evidence type="ECO:0000255" key="5"/>
<evidence type="ECO:0000255" key="6">
    <source>
        <dbReference type="PROSITE-ProRule" id="PRU01187"/>
    </source>
</evidence>
<evidence type="ECO:0000255" key="7">
    <source>
        <dbReference type="PROSITE-ProRule" id="PRU01188"/>
    </source>
</evidence>
<evidence type="ECO:0000256" key="8">
    <source>
        <dbReference type="SAM" id="MobiDB-lite"/>
    </source>
</evidence>
<evidence type="ECO:0000269" key="9">
    <source>
    </source>
</evidence>
<evidence type="ECO:0000269" key="10">
    <source>
    </source>
</evidence>
<evidence type="ECO:0000269" key="11">
    <source>
    </source>
</evidence>
<evidence type="ECO:0000269" key="12">
    <source>
    </source>
</evidence>
<evidence type="ECO:0000269" key="13">
    <source>
    </source>
</evidence>
<evidence type="ECO:0000269" key="14">
    <source>
    </source>
</evidence>
<evidence type="ECO:0000269" key="15">
    <source>
    </source>
</evidence>
<evidence type="ECO:0000269" key="16">
    <source>
    </source>
</evidence>
<evidence type="ECO:0000269" key="17">
    <source>
    </source>
</evidence>
<evidence type="ECO:0000269" key="18">
    <source>
    </source>
</evidence>
<evidence type="ECO:0000269" key="19">
    <source>
    </source>
</evidence>
<evidence type="ECO:0000269" key="20">
    <source>
    </source>
</evidence>
<evidence type="ECO:0000269" key="21">
    <source ref="6"/>
</evidence>
<evidence type="ECO:0000305" key="22"/>
<evidence type="ECO:0000305" key="23">
    <source>
    </source>
</evidence>
<evidence type="ECO:0007744" key="24">
    <source>
        <dbReference type="PDB" id="3TYY"/>
    </source>
</evidence>
<evidence type="ECO:0007744" key="25">
    <source>
        <dbReference type="PDB" id="3UMN"/>
    </source>
</evidence>
<evidence type="ECO:0007744" key="26">
    <source>
        <dbReference type="PDB" id="5BNW"/>
    </source>
</evidence>
<evidence type="ECO:0007744" key="27">
    <source>
        <dbReference type="PDB" id="5VVX"/>
    </source>
</evidence>
<evidence type="ECO:0007744" key="28">
    <source>
        <dbReference type="PDB" id="7DTG"/>
    </source>
</evidence>
<evidence type="ECO:0007744" key="29">
    <source>
    </source>
</evidence>
<evidence type="ECO:0007744" key="30">
    <source>
    </source>
</evidence>
<evidence type="ECO:0007744" key="31">
    <source>
    </source>
</evidence>
<evidence type="ECO:0007744" key="32">
    <source>
    </source>
</evidence>
<evidence type="ECO:0007744" key="33">
    <source>
    </source>
</evidence>
<evidence type="ECO:0007744" key="34">
    <source>
    </source>
</evidence>
<evidence type="ECO:0007744" key="35">
    <source>
    </source>
</evidence>
<evidence type="ECO:0007744" key="36">
    <source>
    </source>
</evidence>
<evidence type="ECO:0007744" key="37">
    <source>
    </source>
</evidence>
<evidence type="ECO:0007744" key="38">
    <source>
    </source>
</evidence>
<evidence type="ECO:0007744" key="39">
    <source>
    </source>
</evidence>
<evidence type="ECO:0007744" key="40">
    <source>
    </source>
</evidence>
<evidence type="ECO:0007744" key="41">
    <source>
    </source>
</evidence>
<evidence type="ECO:0007744" key="42">
    <source>
    </source>
</evidence>
<evidence type="ECO:0007744" key="43">
    <source>
    </source>
</evidence>
<evidence type="ECO:0007744" key="44">
    <source>
    </source>
</evidence>
<evidence type="ECO:0007829" key="45">
    <source>
        <dbReference type="PDB" id="3TYY"/>
    </source>
</evidence>
<evidence type="ECO:0007829" key="46">
    <source>
        <dbReference type="PDB" id="3UMN"/>
    </source>
</evidence>
<accession>P20700</accession>
<accession>B2R6J6</accession>
<accession>Q3SYN7</accession>
<accession>Q96EI6</accession>
<comment type="function">
    <text evidence="15 17">Lamins are intermediate filament proteins that assemble into a filamentous meshwork, and which constitute the major components of the nuclear lamina, a fibrous layer on the nucleoplasmic side of the inner nuclear membrane (PubMed:28716252, PubMed:32910914). Lamins provide a framework for the nuclear envelope, bridging the nuclear envelope and chromatin, thereby playing an important role in nuclear assembly, chromatin organization, nuclear membrane and telomere dynamics (PubMed:28716252, PubMed:32910914). The structural integrity of the lamina is strictly controlled by the cell cycle, as seen by the disintegration and formation of the nuclear envelope in prophase and telophase, respectively (PubMed:28716252, PubMed:32910914).</text>
</comment>
<comment type="subunit">
    <text evidence="2 10 12 19">Homodimer (PubMed:22265972, PubMed:33706103). Lamin dimers then assemble into dimeric head-to-tail polymers. Ultimately, two head-to-tail polymers assemble laterally into a protofilament with a uniformly shaped rod of 3.5 nm in diameter (By similarity). Interacts with SPAG4 and SEPT12 (PubMed:25775403).</text>
</comment>
<comment type="interaction">
    <interactant intactId="EBI-968218">
        <id>P20700</id>
    </interactant>
    <interactant intactId="EBI-347573">
        <id>A6NC98</id>
        <label>CCDC88B</label>
    </interactant>
    <organismsDiffer>false</organismsDiffer>
    <experiments>3</experiments>
</comment>
<comment type="interaction">
    <interactant intactId="EBI-968218">
        <id>P20700</id>
    </interactant>
    <interactant intactId="EBI-1003700">
        <id>Q9H3R5</id>
        <label>CENPH</label>
    </interactant>
    <organismsDiffer>false</organismsDiffer>
    <experiments>3</experiments>
</comment>
<comment type="interaction">
    <interactant intactId="EBI-968218">
        <id>P20700</id>
    </interactant>
    <interactant intactId="EBI-399105">
        <id>Q9NPF5</id>
        <label>DMAP1</label>
    </interactant>
    <organismsDiffer>false</organismsDiffer>
    <experiments>3</experiments>
</comment>
<comment type="interaction">
    <interactant intactId="EBI-968218">
        <id>P20700</id>
    </interactant>
    <interactant intactId="EBI-1220497">
        <id>Q9Y6X4</id>
        <label>FAM169A</label>
    </interactant>
    <organismsDiffer>false</organismsDiffer>
    <experiments>3</experiments>
</comment>
<comment type="interaction">
    <interactant intactId="EBI-968218">
        <id>P20700</id>
    </interactant>
    <interactant intactId="EBI-358383">
        <id>P52294</id>
        <label>KPNA1</label>
    </interactant>
    <organismsDiffer>false</organismsDiffer>
    <experiments>5</experiments>
</comment>
<comment type="interaction">
    <interactant intactId="EBI-968218">
        <id>P20700</id>
    </interactant>
    <interactant intactId="EBI-540602">
        <id>O15131</id>
        <label>KPNA5</label>
    </interactant>
    <organismsDiffer>false</organismsDiffer>
    <experiments>3</experiments>
</comment>
<comment type="interaction">
    <interactant intactId="EBI-968218">
        <id>P20700</id>
    </interactant>
    <interactant intactId="EBI-359923">
        <id>O60684</id>
        <label>KPNA6</label>
    </interactant>
    <organismsDiffer>false</organismsDiffer>
    <experiments>4</experiments>
</comment>
<comment type="interaction">
    <interactant intactId="EBI-968218">
        <id>P20700</id>
    </interactant>
    <interactant intactId="EBI-351935">
        <id>P02545</id>
        <label>LMNA</label>
    </interactant>
    <organismsDiffer>false</organismsDiffer>
    <experiments>23</experiments>
</comment>
<comment type="interaction">
    <interactant intactId="EBI-968218">
        <id>P20700</id>
    </interactant>
    <interactant intactId="EBI-351949">
        <id>P02545-1</id>
        <label>LMNA</label>
    </interactant>
    <organismsDiffer>false</organismsDiffer>
    <experiments>5</experiments>
</comment>
<comment type="interaction">
    <interactant intactId="EBI-968218">
        <id>P20700</id>
    </interactant>
    <interactant intactId="EBI-351953">
        <id>P02545-2</id>
        <label>LMNA</label>
    </interactant>
    <organismsDiffer>false</organismsDiffer>
    <experiments>19</experiments>
</comment>
<comment type="interaction">
    <interactant intactId="EBI-968218">
        <id>P20700</id>
    </interactant>
    <interactant intactId="EBI-2830427">
        <id>Q03252</id>
        <label>LMNB2</label>
    </interactant>
    <organismsDiffer>false</organismsDiffer>
    <experiments>8</experiments>
</comment>
<comment type="interaction">
    <interactant intactId="EBI-968218">
        <id>P20700</id>
    </interactant>
    <interactant intactId="EBI-748182">
        <id>Q8TC57</id>
        <label>M1AP</label>
    </interactant>
    <organismsDiffer>false</organismsDiffer>
    <experiments>3</experiments>
</comment>
<comment type="interaction">
    <interactant intactId="EBI-968218">
        <id>P20700</id>
    </interactant>
    <interactant intactId="EBI-373144">
        <id>Q9GZQ8</id>
        <label>MAP1LC3B</label>
    </interactant>
    <organismsDiffer>false</organismsDiffer>
    <experiments>14</experiments>
</comment>
<comment type="interaction">
    <interactant intactId="EBI-968218">
        <id>P20700</id>
    </interactant>
    <interactant intactId="EBI-10232538">
        <id>Q8WWB5</id>
        <label>PIH1D2</label>
    </interactant>
    <organismsDiffer>false</organismsDiffer>
    <experiments>3</experiments>
</comment>
<comment type="interaction">
    <interactant intactId="EBI-968218">
        <id>P20700</id>
    </interactant>
    <interactant intactId="EBI-1105153">
        <id>Q96KQ4</id>
        <label>PPP1R13B</label>
    </interactant>
    <organismsDiffer>false</organismsDiffer>
    <experiments>3</experiments>
</comment>
<comment type="interaction">
    <interactant intactId="EBI-968218">
        <id>P20700</id>
    </interactant>
    <interactant intactId="EBI-296723">
        <id>O95295</id>
        <label>SNAPIN</label>
    </interactant>
    <organismsDiffer>false</organismsDiffer>
    <experiments>3</experiments>
</comment>
<comment type="interaction">
    <interactant intactId="EBI-968218">
        <id>P20700</id>
    </interactant>
    <interactant intactId="EBI-11952721">
        <id>Q05BL1</id>
        <label>TP53BP2</label>
    </interactant>
    <organismsDiffer>false</organismsDiffer>
    <experiments>3</experiments>
</comment>
<comment type="interaction">
    <interactant intactId="EBI-968218">
        <id>P20700</id>
    </interactant>
    <interactant intactId="EBI-10180829">
        <id>Q7KZS0</id>
        <label>UBE2I</label>
    </interactant>
    <organismsDiffer>false</organismsDiffer>
    <experiments>3</experiments>
</comment>
<comment type="interaction">
    <interactant intactId="EBI-968218">
        <id>P20700</id>
    </interactant>
    <interactant intactId="EBI-6153153">
        <id>Q05322</id>
        <label>VP24</label>
    </interactant>
    <organismsDiffer>true</organismsDiffer>
    <experiments>6</experiments>
</comment>
<comment type="subcellular location">
    <subcellularLocation>
        <location evidence="15 17">Nucleus lamina</location>
    </subcellularLocation>
</comment>
<comment type="PTM">
    <text evidence="14">B-type lamins undergo a series of modifications, such as farnesylation and phosphorylation. Increased phosphorylation of the lamins occurs before envelope disintegration and probably plays a role in regulating lamin associations.</text>
</comment>
<comment type="PTM">
    <text evidence="1">Phosphorylation plays a key role in lamin organization, subcellular localization and nuclear envelope disintegration. Phosphorylation by CDK1 at Ser-23 and Ser-393 at the onset of mitosis drives lamin disassembly and nuclear envelope breakdown.</text>
</comment>
<comment type="disease" evidence="9 15 17">
    <disease id="DI-00646">
        <name>Leukodystrophy, demyelinating, adult-onset, autosomal dominant, typical</name>
        <acronym>ADLDTY</acronym>
        <description>A slowly progressive and fatal demyelinating leukodystrophy, presenting in the fourth or fifth decade of life. Clinically characterized by early autonomic abnormalities, pyramidal and cerebellar dysfunction, and symmetric demyelination of the CNS. It differs from multiple sclerosis and other demyelinating disorders in that neuropathology shows preservation of oligodendroglia in the presence of subtotal demyelination and lack of astrogliosis.</description>
        <dbReference type="MIM" id="169500"/>
    </disease>
    <text evidence="9 20">The disease is caused by variants affecting the gene represented in this entry. The disease is caused by heterozygous tandem genomic duplications that result in an extra copy of the LMNB1 gene and also affect regulatory elements of other genes.</text>
</comment>
<comment type="disease" evidence="20">
    <disease id="DI-06985">
        <name>Leukodystrophy, demyelinating, adult-onset, autosomal dominant, atypical</name>
        <acronym>ADLDAT</acronym>
        <description>An autosomal dominant, slowly progressive disorder characterized by pyramidal signs with muscle weakness, spasticity, dysarthria, dysautonomia, and demyelinating leukodystrophy affecting the cerebrum and cortico-spinal tracts while sparing the cerebellum. Patients usually do not present with autonomic symptoms.</description>
        <dbReference type="MIM" id="621061"/>
    </disease>
    <text evidence="20">The disease is caused by variants affecting the gene represented in this entry. The disease is caused by abnormal LMNB1 expression due to heterozygous deletions involving regulatory elements upstream of LMNB1. It can also be caused by inverted duplications involving LMNB1, as reported in one patient.</text>
</comment>
<comment type="disease" evidence="17 18">
    <disease id="DI-06044">
        <name>Microcephaly 26, primary, autosomal dominant</name>
        <acronym>MCPH26</acronym>
        <description>A form of microcephaly, a disease defined as a head circumference more than 3 standard deviations below the age, sex and ethnically matched mean. Brain weight is markedly reduced and the cerebral cortex is disproportionately small. MCPH26 is an autosomal dominant, progressive form apparent at birth or in early infancy. It is associated with relative short stature, variable severity of intellectual disability, and neurological features as the core symptoms. Brain imaging shows a simplified gyral pattern of the cortex and abnormal corpus callosum in some patients.</description>
        <dbReference type="MIM" id="619179"/>
    </disease>
    <text>The disease is caused by variants affecting the gene represented in this entry.</text>
</comment>
<comment type="similarity">
    <text evidence="7">Belongs to the intermediate filament family.</text>
</comment>
<proteinExistence type="evidence at protein level"/>
<protein>
    <recommendedName>
        <fullName>Lamin-B1</fullName>
    </recommendedName>
</protein>
<dbReference type="EMBL" id="M34458">
    <property type="protein sequence ID" value="AAA36162.1"/>
    <property type="molecule type" value="mRNA"/>
</dbReference>
<dbReference type="EMBL" id="L37747">
    <property type="protein sequence ID" value="AAC37575.1"/>
    <property type="molecule type" value="Genomic_DNA"/>
</dbReference>
<dbReference type="EMBL" id="L37737">
    <property type="protein sequence ID" value="AAC37575.1"/>
    <property type="status" value="JOINED"/>
    <property type="molecule type" value="Genomic_DNA"/>
</dbReference>
<dbReference type="EMBL" id="L37738">
    <property type="protein sequence ID" value="AAC37575.1"/>
    <property type="status" value="JOINED"/>
    <property type="molecule type" value="Genomic_DNA"/>
</dbReference>
<dbReference type="EMBL" id="L37739">
    <property type="protein sequence ID" value="AAC37575.1"/>
    <property type="status" value="JOINED"/>
    <property type="molecule type" value="Genomic_DNA"/>
</dbReference>
<dbReference type="EMBL" id="L37740">
    <property type="protein sequence ID" value="AAC37575.1"/>
    <property type="status" value="JOINED"/>
    <property type="molecule type" value="Genomic_DNA"/>
</dbReference>
<dbReference type="EMBL" id="L37741">
    <property type="protein sequence ID" value="AAC37575.1"/>
    <property type="status" value="JOINED"/>
    <property type="molecule type" value="Genomic_DNA"/>
</dbReference>
<dbReference type="EMBL" id="L37742">
    <property type="protein sequence ID" value="AAC37575.1"/>
    <property type="status" value="JOINED"/>
    <property type="molecule type" value="Genomic_DNA"/>
</dbReference>
<dbReference type="EMBL" id="L37743">
    <property type="protein sequence ID" value="AAC37575.1"/>
    <property type="status" value="JOINED"/>
    <property type="molecule type" value="Genomic_DNA"/>
</dbReference>
<dbReference type="EMBL" id="L37744">
    <property type="protein sequence ID" value="AAC37575.1"/>
    <property type="status" value="JOINED"/>
    <property type="molecule type" value="Genomic_DNA"/>
</dbReference>
<dbReference type="EMBL" id="L37745">
    <property type="protein sequence ID" value="AAC37575.1"/>
    <property type="status" value="JOINED"/>
    <property type="molecule type" value="Genomic_DNA"/>
</dbReference>
<dbReference type="EMBL" id="L37746">
    <property type="protein sequence ID" value="AAC37575.1"/>
    <property type="status" value="JOINED"/>
    <property type="molecule type" value="Genomic_DNA"/>
</dbReference>
<dbReference type="EMBL" id="AK312603">
    <property type="protein sequence ID" value="BAG35493.1"/>
    <property type="molecule type" value="mRNA"/>
</dbReference>
<dbReference type="EMBL" id="CH471086">
    <property type="protein sequence ID" value="EAW48846.1"/>
    <property type="molecule type" value="Genomic_DNA"/>
</dbReference>
<dbReference type="EMBL" id="BC012295">
    <property type="protein sequence ID" value="AAH12295.1"/>
    <property type="molecule type" value="mRNA"/>
</dbReference>
<dbReference type="EMBL" id="BC103723">
    <property type="protein sequence ID" value="AAI03724.1"/>
    <property type="molecule type" value="mRNA"/>
</dbReference>
<dbReference type="CCDS" id="CCDS4140.1"/>
<dbReference type="PIR" id="A34707">
    <property type="entry name" value="VEHULB"/>
</dbReference>
<dbReference type="RefSeq" id="NP_005564.1">
    <property type="nucleotide sequence ID" value="NM_005573.4"/>
</dbReference>
<dbReference type="PDB" id="2KPW">
    <property type="method" value="NMR"/>
    <property type="chains" value="A=439-549"/>
</dbReference>
<dbReference type="PDB" id="3JT0">
    <property type="method" value="X-ray"/>
    <property type="resolution" value="2.39 A"/>
    <property type="chains" value="A/B=426-558"/>
</dbReference>
<dbReference type="PDB" id="3TYY">
    <property type="method" value="X-ray"/>
    <property type="resolution" value="2.40 A"/>
    <property type="chains" value="A/B=311-388"/>
</dbReference>
<dbReference type="PDB" id="3UMN">
    <property type="method" value="X-ray"/>
    <property type="resolution" value="2.00 A"/>
    <property type="chains" value="A/B/C=428-550"/>
</dbReference>
<dbReference type="PDB" id="5BNW">
    <property type="method" value="X-ray"/>
    <property type="resolution" value="2.40 A"/>
    <property type="chains" value="D=389-401"/>
</dbReference>
<dbReference type="PDB" id="5VVX">
    <property type="method" value="X-ray"/>
    <property type="resolution" value="2.90 A"/>
    <property type="chains" value="B/D=389-401"/>
</dbReference>
<dbReference type="PDB" id="7DTG">
    <property type="method" value="X-ray"/>
    <property type="resolution" value="3.60 A"/>
    <property type="chains" value="A/B/C/D/E/F=407-553"/>
</dbReference>
<dbReference type="PDBsum" id="2KPW"/>
<dbReference type="PDBsum" id="3JT0"/>
<dbReference type="PDBsum" id="3TYY"/>
<dbReference type="PDBsum" id="3UMN"/>
<dbReference type="PDBsum" id="5BNW"/>
<dbReference type="PDBsum" id="5VVX"/>
<dbReference type="PDBsum" id="7DTG"/>
<dbReference type="SMR" id="P20700"/>
<dbReference type="BioGRID" id="110187">
    <property type="interactions" value="616"/>
</dbReference>
<dbReference type="CORUM" id="P20700"/>
<dbReference type="DIP" id="DIP-34897N"/>
<dbReference type="FunCoup" id="P20700">
    <property type="interactions" value="2728"/>
</dbReference>
<dbReference type="IntAct" id="P20700">
    <property type="interactions" value="225"/>
</dbReference>
<dbReference type="MINT" id="P20700"/>
<dbReference type="STRING" id="9606.ENSP00000261366"/>
<dbReference type="GlyCosmos" id="P20700">
    <property type="glycosylation" value="2 sites, 2 glycans"/>
</dbReference>
<dbReference type="GlyGen" id="P20700">
    <property type="glycosylation" value="5 sites, 1 N-linked glycan (1 site), 2 O-linked glycans (2 sites)"/>
</dbReference>
<dbReference type="iPTMnet" id="P20700"/>
<dbReference type="MetOSite" id="P20700"/>
<dbReference type="PhosphoSitePlus" id="P20700"/>
<dbReference type="SwissPalm" id="P20700"/>
<dbReference type="BioMuta" id="LMNB1"/>
<dbReference type="DMDM" id="125953"/>
<dbReference type="CPTAC" id="CPTAC-5900"/>
<dbReference type="CPTAC" id="CPTAC-5901"/>
<dbReference type="CPTAC" id="CPTAC-5902"/>
<dbReference type="jPOST" id="P20700"/>
<dbReference type="MassIVE" id="P20700"/>
<dbReference type="PaxDb" id="9606-ENSP00000261366"/>
<dbReference type="PeptideAtlas" id="P20700"/>
<dbReference type="ProteomicsDB" id="53773"/>
<dbReference type="Pumba" id="P20700"/>
<dbReference type="ABCD" id="P20700">
    <property type="antibodies" value="3 sequenced antibodies"/>
</dbReference>
<dbReference type="Antibodypedia" id="3937">
    <property type="antibodies" value="814 antibodies from 49 providers"/>
</dbReference>
<dbReference type="CPTC" id="P20700">
    <property type="antibodies" value="2 antibodies"/>
</dbReference>
<dbReference type="DNASU" id="4001"/>
<dbReference type="Ensembl" id="ENST00000261366.10">
    <property type="protein sequence ID" value="ENSP00000261366.5"/>
    <property type="gene ID" value="ENSG00000113368.12"/>
</dbReference>
<dbReference type="GeneID" id="4001"/>
<dbReference type="KEGG" id="hsa:4001"/>
<dbReference type="MANE-Select" id="ENST00000261366.10">
    <property type="protein sequence ID" value="ENSP00000261366.5"/>
    <property type="RefSeq nucleotide sequence ID" value="NM_005573.4"/>
    <property type="RefSeq protein sequence ID" value="NP_005564.1"/>
</dbReference>
<dbReference type="UCSC" id="uc003kud.3">
    <property type="organism name" value="human"/>
</dbReference>
<dbReference type="AGR" id="HGNC:6637"/>
<dbReference type="CTD" id="4001"/>
<dbReference type="DisGeNET" id="4001"/>
<dbReference type="GeneCards" id="LMNB1"/>
<dbReference type="GeneReviews" id="LMNB1"/>
<dbReference type="HGNC" id="HGNC:6637">
    <property type="gene designation" value="LMNB1"/>
</dbReference>
<dbReference type="HPA" id="ENSG00000113368">
    <property type="expression patterns" value="Tissue enhanced (bone marrow, lymphoid tissue)"/>
</dbReference>
<dbReference type="MalaCards" id="LMNB1"/>
<dbReference type="MIM" id="150340">
    <property type="type" value="gene"/>
</dbReference>
<dbReference type="MIM" id="169500">
    <property type="type" value="phenotype"/>
</dbReference>
<dbReference type="MIM" id="619179">
    <property type="type" value="phenotype"/>
</dbReference>
<dbReference type="MIM" id="621061">
    <property type="type" value="phenotype"/>
</dbReference>
<dbReference type="neXtProt" id="NX_P20700"/>
<dbReference type="OpenTargets" id="ENSG00000113368"/>
<dbReference type="Orphanet" id="99027">
    <property type="disease" value="Adult-onset autosomal dominant leukodystrophy"/>
</dbReference>
<dbReference type="Orphanet" id="2514">
    <property type="disease" value="Autosomal dominant primary microcephaly"/>
</dbReference>
<dbReference type="PharmGKB" id="PA30403"/>
<dbReference type="VEuPathDB" id="HostDB:ENSG00000113368"/>
<dbReference type="eggNOG" id="KOG0977">
    <property type="taxonomic scope" value="Eukaryota"/>
</dbReference>
<dbReference type="GeneTree" id="ENSGT00940000157199"/>
<dbReference type="HOGENOM" id="CLU_012560_9_2_1"/>
<dbReference type="InParanoid" id="P20700"/>
<dbReference type="OMA" id="GYEMIKT"/>
<dbReference type="OrthoDB" id="102442at2759"/>
<dbReference type="PAN-GO" id="P20700">
    <property type="GO annotations" value="7 GO annotations based on evolutionary models"/>
</dbReference>
<dbReference type="PhylomeDB" id="P20700"/>
<dbReference type="TreeFam" id="TF101181"/>
<dbReference type="PathwayCommons" id="P20700"/>
<dbReference type="Reactome" id="R-HSA-1221632">
    <property type="pathway name" value="Meiotic synapsis"/>
</dbReference>
<dbReference type="Reactome" id="R-HSA-2559584">
    <property type="pathway name" value="Formation of Senescence-Associated Heterochromatin Foci (SAHF)"/>
</dbReference>
<dbReference type="Reactome" id="R-HSA-2980766">
    <property type="pathway name" value="Nuclear Envelope Breakdown"/>
</dbReference>
<dbReference type="Reactome" id="R-HSA-2995383">
    <property type="pathway name" value="Initiation of Nuclear Envelope (NE) Reformation"/>
</dbReference>
<dbReference type="Reactome" id="R-HSA-352238">
    <property type="pathway name" value="Breakdown of the nuclear lamina"/>
</dbReference>
<dbReference type="Reactome" id="R-HSA-4419969">
    <property type="pathway name" value="Depolymerization of the Nuclear Lamina"/>
</dbReference>
<dbReference type="Reactome" id="R-HSA-8862803">
    <property type="pathway name" value="Deregulated CDK5 triggers multiple neurodegenerative pathways in Alzheimer's disease models"/>
</dbReference>
<dbReference type="Reactome" id="R-HSA-8950505">
    <property type="pathway name" value="Gene and protein expression by JAK-STAT signaling after Interleukin-12 stimulation"/>
</dbReference>
<dbReference type="Reactome" id="R-HSA-9013405">
    <property type="pathway name" value="RHOD GTPase cycle"/>
</dbReference>
<dbReference type="Reactome" id="R-HSA-9035034">
    <property type="pathway name" value="RHOF GTPase cycle"/>
</dbReference>
<dbReference type="SignaLink" id="P20700"/>
<dbReference type="SIGNOR" id="P20700"/>
<dbReference type="BioGRID-ORCS" id="4001">
    <property type="hits" value="91 hits in 1166 CRISPR screens"/>
</dbReference>
<dbReference type="CD-CODE" id="232F8A39">
    <property type="entry name" value="P-body"/>
</dbReference>
<dbReference type="CD-CODE" id="91857CE7">
    <property type="entry name" value="Nucleolus"/>
</dbReference>
<dbReference type="ChiTaRS" id="LMNB1">
    <property type="organism name" value="human"/>
</dbReference>
<dbReference type="EvolutionaryTrace" id="P20700"/>
<dbReference type="GeneWiki" id="LMNB1"/>
<dbReference type="GenomeRNAi" id="4001"/>
<dbReference type="Pharos" id="P20700">
    <property type="development level" value="Tbio"/>
</dbReference>
<dbReference type="PRO" id="PR:P20700"/>
<dbReference type="Proteomes" id="UP000005640">
    <property type="component" value="Chromosome 5"/>
</dbReference>
<dbReference type="RNAct" id="P20700">
    <property type="molecule type" value="protein"/>
</dbReference>
<dbReference type="Bgee" id="ENSG00000113368">
    <property type="expression patterns" value="Expressed in ventricular zone and 145 other cell types or tissues"/>
</dbReference>
<dbReference type="ExpressionAtlas" id="P20700">
    <property type="expression patterns" value="baseline and differential"/>
</dbReference>
<dbReference type="GO" id="GO:0005638">
    <property type="term" value="C:lamin filament"/>
    <property type="evidence" value="ECO:0007669"/>
    <property type="project" value="Ensembl"/>
</dbReference>
<dbReference type="GO" id="GO:0016020">
    <property type="term" value="C:membrane"/>
    <property type="evidence" value="ECO:0007005"/>
    <property type="project" value="UniProtKB"/>
</dbReference>
<dbReference type="GO" id="GO:0005635">
    <property type="term" value="C:nuclear envelope"/>
    <property type="evidence" value="ECO:0000304"/>
    <property type="project" value="Reactome"/>
</dbReference>
<dbReference type="GO" id="GO:0005637">
    <property type="term" value="C:nuclear inner membrane"/>
    <property type="evidence" value="ECO:0007669"/>
    <property type="project" value="Ensembl"/>
</dbReference>
<dbReference type="GO" id="GO:0005652">
    <property type="term" value="C:nuclear lamina"/>
    <property type="evidence" value="ECO:0000315"/>
    <property type="project" value="UniProtKB"/>
</dbReference>
<dbReference type="GO" id="GO:0016363">
    <property type="term" value="C:nuclear matrix"/>
    <property type="evidence" value="ECO:0007669"/>
    <property type="project" value="Ensembl"/>
</dbReference>
<dbReference type="GO" id="GO:0031965">
    <property type="term" value="C:nuclear membrane"/>
    <property type="evidence" value="ECO:0000314"/>
    <property type="project" value="HPA"/>
</dbReference>
<dbReference type="GO" id="GO:0005654">
    <property type="term" value="C:nucleoplasm"/>
    <property type="evidence" value="ECO:0000304"/>
    <property type="project" value="Reactome"/>
</dbReference>
<dbReference type="GO" id="GO:0005634">
    <property type="term" value="C:nucleus"/>
    <property type="evidence" value="ECO:0000314"/>
    <property type="project" value="CAFA"/>
</dbReference>
<dbReference type="GO" id="GO:0043274">
    <property type="term" value="F:phospholipase binding"/>
    <property type="evidence" value="ECO:0007669"/>
    <property type="project" value="Ensembl"/>
</dbReference>
<dbReference type="GO" id="GO:1990837">
    <property type="term" value="F:sequence-specific double-stranded DNA binding"/>
    <property type="evidence" value="ECO:0007669"/>
    <property type="project" value="Ensembl"/>
</dbReference>
<dbReference type="GO" id="GO:0005200">
    <property type="term" value="F:structural constituent of cytoskeleton"/>
    <property type="evidence" value="ECO:0000318"/>
    <property type="project" value="GO_Central"/>
</dbReference>
<dbReference type="GO" id="GO:0160123">
    <property type="term" value="F:structural constituent of nuclear lamina"/>
    <property type="evidence" value="ECO:0000304"/>
    <property type="project" value="UniProtKB"/>
</dbReference>
<dbReference type="GO" id="GO:0031507">
    <property type="term" value="P:heterochromatin formation"/>
    <property type="evidence" value="ECO:0000318"/>
    <property type="project" value="GO_Central"/>
</dbReference>
<dbReference type="GO" id="GO:0006998">
    <property type="term" value="P:nuclear envelope organization"/>
    <property type="evidence" value="ECO:0000315"/>
    <property type="project" value="UniProtKB"/>
</dbReference>
<dbReference type="GO" id="GO:0007097">
    <property type="term" value="P:nuclear migration"/>
    <property type="evidence" value="ECO:0000318"/>
    <property type="project" value="GO_Central"/>
</dbReference>
<dbReference type="GO" id="GO:0051664">
    <property type="term" value="P:nuclear pore localization"/>
    <property type="evidence" value="ECO:0000318"/>
    <property type="project" value="GO_Central"/>
</dbReference>
<dbReference type="GO" id="GO:0090435">
    <property type="term" value="P:protein localization to nuclear envelope"/>
    <property type="evidence" value="ECO:0000318"/>
    <property type="project" value="GO_Central"/>
</dbReference>
<dbReference type="FunFam" id="1.20.5.170:FF:000033">
    <property type="entry name" value="Lamin A/C"/>
    <property type="match status" value="1"/>
</dbReference>
<dbReference type="FunFam" id="1.20.5.1160:FF:000007">
    <property type="entry name" value="Lamin B1"/>
    <property type="match status" value="1"/>
</dbReference>
<dbReference type="FunFam" id="2.60.40.1260:FF:000002">
    <property type="entry name" value="Lamin B1"/>
    <property type="match status" value="1"/>
</dbReference>
<dbReference type="Gene3D" id="1.20.5.170">
    <property type="match status" value="1"/>
</dbReference>
<dbReference type="Gene3D" id="2.60.40.1260">
    <property type="entry name" value="Lamin Tail domain"/>
    <property type="match status" value="1"/>
</dbReference>
<dbReference type="Gene3D" id="1.20.5.500">
    <property type="entry name" value="Single helix bin"/>
    <property type="match status" value="1"/>
</dbReference>
<dbReference type="Gene3D" id="1.20.5.1160">
    <property type="entry name" value="Vasodilator-stimulated phosphoprotein"/>
    <property type="match status" value="2"/>
</dbReference>
<dbReference type="InterPro" id="IPR018039">
    <property type="entry name" value="IF_conserved"/>
</dbReference>
<dbReference type="InterPro" id="IPR039008">
    <property type="entry name" value="IF_rod_dom"/>
</dbReference>
<dbReference type="InterPro" id="IPR001322">
    <property type="entry name" value="Lamin_tail_dom"/>
</dbReference>
<dbReference type="InterPro" id="IPR036415">
    <property type="entry name" value="Lamin_tail_dom_sf"/>
</dbReference>
<dbReference type="PANTHER" id="PTHR45721">
    <property type="entry name" value="LAMIN DM0-RELATED"/>
    <property type="match status" value="1"/>
</dbReference>
<dbReference type="PANTHER" id="PTHR45721:SF3">
    <property type="entry name" value="LAMIN-B1"/>
    <property type="match status" value="1"/>
</dbReference>
<dbReference type="Pfam" id="PF00038">
    <property type="entry name" value="Filament"/>
    <property type="match status" value="1"/>
</dbReference>
<dbReference type="Pfam" id="PF00932">
    <property type="entry name" value="LTD"/>
    <property type="match status" value="1"/>
</dbReference>
<dbReference type="SMART" id="SM01391">
    <property type="entry name" value="Filament"/>
    <property type="match status" value="1"/>
</dbReference>
<dbReference type="SUPFAM" id="SSF64593">
    <property type="entry name" value="Intermediate filament protein, coiled coil region"/>
    <property type="match status" value="2"/>
</dbReference>
<dbReference type="SUPFAM" id="SSF74853">
    <property type="entry name" value="Lamin A/C globular tail domain"/>
    <property type="match status" value="1"/>
</dbReference>
<dbReference type="PROSITE" id="PS00226">
    <property type="entry name" value="IF_ROD_1"/>
    <property type="match status" value="1"/>
</dbReference>
<dbReference type="PROSITE" id="PS51842">
    <property type="entry name" value="IF_ROD_2"/>
    <property type="match status" value="1"/>
</dbReference>
<dbReference type="PROSITE" id="PS51841">
    <property type="entry name" value="LTD"/>
    <property type="match status" value="1"/>
</dbReference>
<gene>
    <name type="primary">LMNB1</name>
    <name type="synonym">LMN2</name>
    <name type="synonym">LMNB</name>
</gene>
<name>LMNB1_HUMAN</name>
<keyword id="KW-0002">3D-structure</keyword>
<keyword id="KW-0007">Acetylation</keyword>
<keyword id="KW-0160">Chromosomal rearrangement</keyword>
<keyword id="KW-0175">Coiled coil</keyword>
<keyword id="KW-0903">Direct protein sequencing</keyword>
<keyword id="KW-0225">Disease variant</keyword>
<keyword id="KW-1015">Disulfide bond</keyword>
<keyword id="KW-0325">Glycoprotein</keyword>
<keyword id="KW-0991">Intellectual disability</keyword>
<keyword id="KW-0403">Intermediate filament</keyword>
<keyword id="KW-1017">Isopeptide bond</keyword>
<keyword id="KW-1026">Leukodystrophy</keyword>
<keyword id="KW-0449">Lipoprotein</keyword>
<keyword id="KW-0488">Methylation</keyword>
<keyword id="KW-0539">Nucleus</keyword>
<keyword id="KW-0597">Phosphoprotein</keyword>
<keyword id="KW-0636">Prenylation</keyword>
<keyword id="KW-0905">Primary microcephaly</keyword>
<keyword id="KW-1267">Proteomics identification</keyword>
<keyword id="KW-1185">Reference proteome</keyword>
<keyword id="KW-0832">Ubl conjugation</keyword>
<reference key="1">
    <citation type="journal article" date="1990" name="Mol. Cell. Biol.">
        <title>In vitro posttranslational modification of lamin B cloned from a human T-cell line.</title>
        <authorList>
            <person name="Pollard K.M."/>
            <person name="Chan E.K.L."/>
            <person name="Grant B.J."/>
            <person name="Sullivan K.F."/>
            <person name="Tan E.M."/>
            <person name="Glass C.A."/>
        </authorList>
    </citation>
    <scope>NUCLEOTIDE SEQUENCE [MRNA]</scope>
</reference>
<reference key="2">
    <citation type="journal article" date="1995" name="Genomics">
        <title>Structural organization of the human gene (LMNB1) encoding nuclear lamin B1.</title>
        <authorList>
            <person name="Lin F."/>
            <person name="Worman H.J."/>
        </authorList>
    </citation>
    <scope>NUCLEOTIDE SEQUENCE [GENOMIC DNA]</scope>
</reference>
<reference key="3">
    <citation type="journal article" date="2004" name="Nat. Genet.">
        <title>Complete sequencing and characterization of 21,243 full-length human cDNAs.</title>
        <authorList>
            <person name="Ota T."/>
            <person name="Suzuki Y."/>
            <person name="Nishikawa T."/>
            <person name="Otsuki T."/>
            <person name="Sugiyama T."/>
            <person name="Irie R."/>
            <person name="Wakamatsu A."/>
            <person name="Hayashi K."/>
            <person name="Sato H."/>
            <person name="Nagai K."/>
            <person name="Kimura K."/>
            <person name="Makita H."/>
            <person name="Sekine M."/>
            <person name="Obayashi M."/>
            <person name="Nishi T."/>
            <person name="Shibahara T."/>
            <person name="Tanaka T."/>
            <person name="Ishii S."/>
            <person name="Yamamoto J."/>
            <person name="Saito K."/>
            <person name="Kawai Y."/>
            <person name="Isono Y."/>
            <person name="Nakamura Y."/>
            <person name="Nagahari K."/>
            <person name="Murakami K."/>
            <person name="Yasuda T."/>
            <person name="Iwayanagi T."/>
            <person name="Wagatsuma M."/>
            <person name="Shiratori A."/>
            <person name="Sudo H."/>
            <person name="Hosoiri T."/>
            <person name="Kaku Y."/>
            <person name="Kodaira H."/>
            <person name="Kondo H."/>
            <person name="Sugawara M."/>
            <person name="Takahashi M."/>
            <person name="Kanda K."/>
            <person name="Yokoi T."/>
            <person name="Furuya T."/>
            <person name="Kikkawa E."/>
            <person name="Omura Y."/>
            <person name="Abe K."/>
            <person name="Kamihara K."/>
            <person name="Katsuta N."/>
            <person name="Sato K."/>
            <person name="Tanikawa M."/>
            <person name="Yamazaki M."/>
            <person name="Ninomiya K."/>
            <person name="Ishibashi T."/>
            <person name="Yamashita H."/>
            <person name="Murakawa K."/>
            <person name="Fujimori K."/>
            <person name="Tanai H."/>
            <person name="Kimata M."/>
            <person name="Watanabe M."/>
            <person name="Hiraoka S."/>
            <person name="Chiba Y."/>
            <person name="Ishida S."/>
            <person name="Ono Y."/>
            <person name="Takiguchi S."/>
            <person name="Watanabe S."/>
            <person name="Yosida M."/>
            <person name="Hotuta T."/>
            <person name="Kusano J."/>
            <person name="Kanehori K."/>
            <person name="Takahashi-Fujii A."/>
            <person name="Hara H."/>
            <person name="Tanase T.-O."/>
            <person name="Nomura Y."/>
            <person name="Togiya S."/>
            <person name="Komai F."/>
            <person name="Hara R."/>
            <person name="Takeuchi K."/>
            <person name="Arita M."/>
            <person name="Imose N."/>
            <person name="Musashino K."/>
            <person name="Yuuki H."/>
            <person name="Oshima A."/>
            <person name="Sasaki N."/>
            <person name="Aotsuka S."/>
            <person name="Yoshikawa Y."/>
            <person name="Matsunawa H."/>
            <person name="Ichihara T."/>
            <person name="Shiohata N."/>
            <person name="Sano S."/>
            <person name="Moriya S."/>
            <person name="Momiyama H."/>
            <person name="Satoh N."/>
            <person name="Takami S."/>
            <person name="Terashima Y."/>
            <person name="Suzuki O."/>
            <person name="Nakagawa S."/>
            <person name="Senoh A."/>
            <person name="Mizoguchi H."/>
            <person name="Goto Y."/>
            <person name="Shimizu F."/>
            <person name="Wakebe H."/>
            <person name="Hishigaki H."/>
            <person name="Watanabe T."/>
            <person name="Sugiyama A."/>
            <person name="Takemoto M."/>
            <person name="Kawakami B."/>
            <person name="Yamazaki M."/>
            <person name="Watanabe K."/>
            <person name="Kumagai A."/>
            <person name="Itakura S."/>
            <person name="Fukuzumi Y."/>
            <person name="Fujimori Y."/>
            <person name="Komiyama M."/>
            <person name="Tashiro H."/>
            <person name="Tanigami A."/>
            <person name="Fujiwara T."/>
            <person name="Ono T."/>
            <person name="Yamada K."/>
            <person name="Fujii Y."/>
            <person name="Ozaki K."/>
            <person name="Hirao M."/>
            <person name="Ohmori Y."/>
            <person name="Kawabata A."/>
            <person name="Hikiji T."/>
            <person name="Kobatake N."/>
            <person name="Inagaki H."/>
            <person name="Ikema Y."/>
            <person name="Okamoto S."/>
            <person name="Okitani R."/>
            <person name="Kawakami T."/>
            <person name="Noguchi S."/>
            <person name="Itoh T."/>
            <person name="Shigeta K."/>
            <person name="Senba T."/>
            <person name="Matsumura K."/>
            <person name="Nakajima Y."/>
            <person name="Mizuno T."/>
            <person name="Morinaga M."/>
            <person name="Sasaki M."/>
            <person name="Togashi T."/>
            <person name="Oyama M."/>
            <person name="Hata H."/>
            <person name="Watanabe M."/>
            <person name="Komatsu T."/>
            <person name="Mizushima-Sugano J."/>
            <person name="Satoh T."/>
            <person name="Shirai Y."/>
            <person name="Takahashi Y."/>
            <person name="Nakagawa K."/>
            <person name="Okumura K."/>
            <person name="Nagase T."/>
            <person name="Nomura N."/>
            <person name="Kikuchi H."/>
            <person name="Masuho Y."/>
            <person name="Yamashita R."/>
            <person name="Nakai K."/>
            <person name="Yada T."/>
            <person name="Nakamura Y."/>
            <person name="Ohara O."/>
            <person name="Isogai T."/>
            <person name="Sugano S."/>
        </authorList>
    </citation>
    <scope>NUCLEOTIDE SEQUENCE [LARGE SCALE MRNA]</scope>
    <source>
        <tissue>Brain</tissue>
    </source>
</reference>
<reference key="4">
    <citation type="submission" date="2005-09" db="EMBL/GenBank/DDBJ databases">
        <authorList>
            <person name="Mural R.J."/>
            <person name="Istrail S."/>
            <person name="Sutton G.G."/>
            <person name="Florea L."/>
            <person name="Halpern A.L."/>
            <person name="Mobarry C.M."/>
            <person name="Lippert R."/>
            <person name="Walenz B."/>
            <person name="Shatkay H."/>
            <person name="Dew I."/>
            <person name="Miller J.R."/>
            <person name="Flanigan M.J."/>
            <person name="Edwards N.J."/>
            <person name="Bolanos R."/>
            <person name="Fasulo D."/>
            <person name="Halldorsson B.V."/>
            <person name="Hannenhalli S."/>
            <person name="Turner R."/>
            <person name="Yooseph S."/>
            <person name="Lu F."/>
            <person name="Nusskern D.R."/>
            <person name="Shue B.C."/>
            <person name="Zheng X.H."/>
            <person name="Zhong F."/>
            <person name="Delcher A.L."/>
            <person name="Huson D.H."/>
            <person name="Kravitz S.A."/>
            <person name="Mouchard L."/>
            <person name="Reinert K."/>
            <person name="Remington K.A."/>
            <person name="Clark A.G."/>
            <person name="Waterman M.S."/>
            <person name="Eichler E.E."/>
            <person name="Adams M.D."/>
            <person name="Hunkapiller M.W."/>
            <person name="Myers E.W."/>
            <person name="Venter J.C."/>
        </authorList>
    </citation>
    <scope>NUCLEOTIDE SEQUENCE [LARGE SCALE GENOMIC DNA]</scope>
</reference>
<reference key="5">
    <citation type="journal article" date="2004" name="Genome Res.">
        <title>The status, quality, and expansion of the NIH full-length cDNA project: the Mammalian Gene Collection (MGC).</title>
        <authorList>
            <consortium name="The MGC Project Team"/>
        </authorList>
    </citation>
    <scope>NUCLEOTIDE SEQUENCE [LARGE SCALE MRNA]</scope>
    <source>
        <tissue>Eye</tissue>
        <tissue>Placenta</tissue>
    </source>
</reference>
<reference key="6">
    <citation type="submission" date="2008-12" db="UniProtKB">
        <authorList>
            <person name="Bienvenut W.V."/>
            <person name="Lilla S."/>
            <person name="von Kriegsheim A."/>
            <person name="Lempens A."/>
            <person name="Kolch W."/>
        </authorList>
    </citation>
    <scope>PROTEIN SEQUENCE OF 2-10; 15-26; 43-49; 80-90; 103-109; 112-123; 125-191; 198-220; 235-250; 259-271; 277-290; 300-312; 321-330; 351-387; 475-483 AND 517-528</scope>
    <scope>CLEAVAGE OF INITIATOR METHIONINE</scope>
    <scope>ACETYLATION AT ALA-2</scope>
    <scope>IDENTIFICATION BY MASS SPECTROMETRY</scope>
    <source>
        <tissue>Ovarian carcinoma</tissue>
    </source>
</reference>
<reference key="7">
    <citation type="submission" date="2008-12" db="UniProtKB">
        <authorList>
            <person name="Lubec G."/>
            <person name="Vishwanath V."/>
            <person name="Chen W.-Q."/>
            <person name="Sun Y."/>
        </authorList>
    </citation>
    <scope>PROTEIN SEQUENCE OF 52-67; 80-90; 112-123; 146-156; 198-208; 210-220; 300-312; 321-330; 351-378 AND 458-473</scope>
    <scope>IDENTIFICATION BY MASS SPECTROMETRY</scope>
    <source>
        <tissue>Brain</tissue>
        <tissue>Cajal-Retzius cell</tissue>
        <tissue>Fetal brain cortex</tissue>
    </source>
</reference>
<reference key="8">
    <citation type="journal article" date="1989" name="J. Biol. Chem.">
        <title>Human lamin B contains a farnesylated cysteine residue.</title>
        <authorList>
            <person name="Farnsworth C.C."/>
            <person name="Wolda S.L."/>
            <person name="Gelb M.H."/>
            <person name="Glomset J.A."/>
        </authorList>
    </citation>
    <scope>ISOPRENYLATION AT CYS-583</scope>
    <scope>METHYLATION AT CYS-583</scope>
</reference>
<reference key="9">
    <citation type="journal article" date="2003" name="Nature">
        <title>Proteomic characterization of the human centrosome by protein correlation profiling.</title>
        <authorList>
            <person name="Andersen J.S."/>
            <person name="Wilkinson C.J."/>
            <person name="Mayor T."/>
            <person name="Mortensen P."/>
            <person name="Nigg E.A."/>
            <person name="Mann M."/>
        </authorList>
    </citation>
    <scope>IDENTIFICATION BY MASS SPECTROMETRY</scope>
    <source>
        <tissue>Lymphoblast</tissue>
    </source>
</reference>
<reference key="10">
    <citation type="journal article" date="2006" name="Cell">
        <title>Global, in vivo, and site-specific phosphorylation dynamics in signaling networks.</title>
        <authorList>
            <person name="Olsen J.V."/>
            <person name="Blagoev B."/>
            <person name="Gnad F."/>
            <person name="Macek B."/>
            <person name="Kumar C."/>
            <person name="Mortensen P."/>
            <person name="Mann M."/>
        </authorList>
    </citation>
    <scope>PHOSPHORYLATION [LARGE SCALE ANALYSIS] AT THR-575</scope>
    <scope>IDENTIFICATION BY MASS SPECTROMETRY [LARGE SCALE ANALYSIS]</scope>
    <source>
        <tissue>Cervix carcinoma</tissue>
    </source>
</reference>
<reference key="11">
    <citation type="journal article" date="2006" name="Nat. Biotechnol.">
        <title>A probability-based approach for high-throughput protein phosphorylation analysis and site localization.</title>
        <authorList>
            <person name="Beausoleil S.A."/>
            <person name="Villen J."/>
            <person name="Gerber S.A."/>
            <person name="Rush J."/>
            <person name="Gygi S.P."/>
        </authorList>
    </citation>
    <scope>PHOSPHORYLATION [LARGE SCALE ANALYSIS] AT THR-20 AND SER-23</scope>
    <scope>IDENTIFICATION BY MASS SPECTROMETRY [LARGE SCALE ANALYSIS]</scope>
    <source>
        <tissue>Cervix carcinoma</tissue>
    </source>
</reference>
<reference key="12">
    <citation type="journal article" date="2006" name="Nat. Genet.">
        <title>Lamin B1 duplications cause autosomal dominant leukodystrophy.</title>
        <authorList>
            <person name="Padiath Q.S."/>
            <person name="Saigoh K."/>
            <person name="Schiffmann R."/>
            <person name="Asahara H."/>
            <person name="Yamada T."/>
            <person name="Koeppen A."/>
            <person name="Hogan K."/>
            <person name="Ptacek L.J."/>
            <person name="Fu Y.-H."/>
        </authorList>
    </citation>
    <scope>INVOLVEMENT IN ADLDTY</scope>
</reference>
<reference key="13">
    <citation type="journal article" date="2008" name="Mol. Cell">
        <title>Kinase-selective enrichment enables quantitative phosphoproteomics of the kinome across the cell cycle.</title>
        <authorList>
            <person name="Daub H."/>
            <person name="Olsen J.V."/>
            <person name="Bairlein M."/>
            <person name="Gnad F."/>
            <person name="Oppermann F.S."/>
            <person name="Korner R."/>
            <person name="Greff Z."/>
            <person name="Keri G."/>
            <person name="Stemmann O."/>
            <person name="Mann M."/>
        </authorList>
    </citation>
    <scope>IDENTIFICATION BY MASS SPECTROMETRY [LARGE SCALE ANALYSIS]</scope>
    <source>
        <tissue>Cervix carcinoma</tissue>
    </source>
</reference>
<reference key="14">
    <citation type="journal article" date="2008" name="Proc. Natl. Acad. Sci. U.S.A.">
        <title>A quantitative atlas of mitotic phosphorylation.</title>
        <authorList>
            <person name="Dephoure N."/>
            <person name="Zhou C."/>
            <person name="Villen J."/>
            <person name="Beausoleil S.A."/>
            <person name="Bakalarski C.E."/>
            <person name="Elledge S.J."/>
            <person name="Gygi S.P."/>
        </authorList>
    </citation>
    <scope>PHOSPHORYLATION [LARGE SCALE ANALYSIS] AT THR-20; SER-23 AND THR-575</scope>
    <scope>IDENTIFICATION BY MASS SPECTROMETRY [LARGE SCALE ANALYSIS]</scope>
    <source>
        <tissue>Cervix carcinoma</tissue>
    </source>
</reference>
<reference key="15">
    <citation type="journal article" date="2009" name="Anal. Chem.">
        <title>Lys-N and trypsin cover complementary parts of the phosphoproteome in a refined SCX-based approach.</title>
        <authorList>
            <person name="Gauci S."/>
            <person name="Helbig A.O."/>
            <person name="Slijper M."/>
            <person name="Krijgsveld J."/>
            <person name="Heck A.J."/>
            <person name="Mohammed S."/>
        </authorList>
    </citation>
    <scope>ACETYLATION [LARGE SCALE ANALYSIS] AT ALA-2</scope>
    <scope>CLEAVAGE OF INITIATOR METHIONINE [LARGE SCALE ANALYSIS]</scope>
    <scope>IDENTIFICATION BY MASS SPECTROMETRY [LARGE SCALE ANALYSIS]</scope>
</reference>
<reference key="16">
    <citation type="journal article" date="2009" name="Sci. Signal.">
        <title>Quantitative phosphoproteomic analysis of T cell receptor signaling reveals system-wide modulation of protein-protein interactions.</title>
        <authorList>
            <person name="Mayya V."/>
            <person name="Lundgren D.H."/>
            <person name="Hwang S.-I."/>
            <person name="Rezaul K."/>
            <person name="Wu L."/>
            <person name="Eng J.K."/>
            <person name="Rodionov V."/>
            <person name="Han D.K."/>
        </authorList>
    </citation>
    <scope>PHOSPHORYLATION [LARGE SCALE ANALYSIS] AT SER-375</scope>
    <scope>IDENTIFICATION BY MASS SPECTROMETRY [LARGE SCALE ANALYSIS]</scope>
    <source>
        <tissue>Leukemic T-cell</tissue>
    </source>
</reference>
<reference key="17">
    <citation type="journal article" date="2009" name="Science">
        <title>Lysine acetylation targets protein complexes and co-regulates major cellular functions.</title>
        <authorList>
            <person name="Choudhary C."/>
            <person name="Kumar C."/>
            <person name="Gnad F."/>
            <person name="Nielsen M.L."/>
            <person name="Rehman M."/>
            <person name="Walther T.C."/>
            <person name="Olsen J.V."/>
            <person name="Mann M."/>
        </authorList>
    </citation>
    <scope>ACETYLATION [LARGE SCALE ANALYSIS] AT LYS-157; LYS-271 AND LYS-483</scope>
    <scope>IDENTIFICATION BY MASS SPECTROMETRY [LARGE SCALE ANALYSIS]</scope>
</reference>
<reference key="18">
    <citation type="journal article" date="2010" name="Sci. Signal.">
        <title>Quantitative phosphoproteomics reveals widespread full phosphorylation site occupancy during mitosis.</title>
        <authorList>
            <person name="Olsen J.V."/>
            <person name="Vermeulen M."/>
            <person name="Santamaria A."/>
            <person name="Kumar C."/>
            <person name="Miller M.L."/>
            <person name="Jensen L.J."/>
            <person name="Gnad F."/>
            <person name="Cox J."/>
            <person name="Jensen T.S."/>
            <person name="Nigg E.A."/>
            <person name="Brunak S."/>
            <person name="Mann M."/>
        </authorList>
    </citation>
    <scope>ACETYLATION [LARGE SCALE ANALYSIS] AT ALA-2</scope>
    <scope>PHOSPHORYLATION [LARGE SCALE ANALYSIS] AT THR-3; THR-5; SER-23; SER-375 AND THR-575</scope>
    <scope>CLEAVAGE OF INITIATOR METHIONINE [LARGE SCALE ANALYSIS]</scope>
    <scope>IDENTIFICATION BY MASS SPECTROMETRY [LARGE SCALE ANALYSIS]</scope>
    <source>
        <tissue>Cervix carcinoma</tissue>
    </source>
</reference>
<reference key="19">
    <citation type="journal article" date="2011" name="BMC Syst. Biol.">
        <title>Initial characterization of the human central proteome.</title>
        <authorList>
            <person name="Burkard T.R."/>
            <person name="Planyavsky M."/>
            <person name="Kaupe I."/>
            <person name="Breitwieser F.P."/>
            <person name="Buerckstuemmer T."/>
            <person name="Bennett K.L."/>
            <person name="Superti-Furga G."/>
            <person name="Colinge J."/>
        </authorList>
    </citation>
    <scope>IDENTIFICATION BY MASS SPECTROMETRY [LARGE SCALE ANALYSIS]</scope>
</reference>
<reference key="20">
    <citation type="journal article" date="2011" name="Sci. Signal.">
        <title>System-wide temporal characterization of the proteome and phosphoproteome of human embryonic stem cell differentiation.</title>
        <authorList>
            <person name="Rigbolt K.T."/>
            <person name="Prokhorova T.A."/>
            <person name="Akimov V."/>
            <person name="Henningsen J."/>
            <person name="Johansen P.T."/>
            <person name="Kratchmarova I."/>
            <person name="Kassem M."/>
            <person name="Mann M."/>
            <person name="Olsen J.V."/>
            <person name="Blagoev B."/>
        </authorList>
    </citation>
    <scope>PHOSPHORYLATION [LARGE SCALE ANALYSIS] AT SER-23; SER-210 AND THR-575</scope>
    <scope>IDENTIFICATION BY MASS SPECTROMETRY [LARGE SCALE ANALYSIS]</scope>
</reference>
<reference key="21">
    <citation type="journal article" date="2012" name="Mol. Cell. Proteomics">
        <title>Comparative large-scale characterisation of plant vs. mammal proteins reveals similar and idiosyncratic N-alpha acetylation features.</title>
        <authorList>
            <person name="Bienvenut W.V."/>
            <person name="Sumpton D."/>
            <person name="Martinez A."/>
            <person name="Lilla S."/>
            <person name="Espagne C."/>
            <person name="Meinnel T."/>
            <person name="Giglione C."/>
        </authorList>
    </citation>
    <scope>ACETYLATION [LARGE SCALE ANALYSIS] AT ALA-2</scope>
    <scope>CLEAVAGE OF INITIATOR METHIONINE [LARGE SCALE ANALYSIS]</scope>
    <scope>IDENTIFICATION BY MASS SPECTROMETRY [LARGE SCALE ANALYSIS]</scope>
</reference>
<reference key="22">
    <citation type="journal article" date="2013" name="J. Proteome Res.">
        <title>Toward a comprehensive characterization of a human cancer cell phosphoproteome.</title>
        <authorList>
            <person name="Zhou H."/>
            <person name="Di Palma S."/>
            <person name="Preisinger C."/>
            <person name="Peng M."/>
            <person name="Polat A.N."/>
            <person name="Heck A.J."/>
            <person name="Mohammed S."/>
        </authorList>
    </citation>
    <scope>PHOSPHORYLATION [LARGE SCALE ANALYSIS] AT THR-5; THR-20; SER-23; THR-25; SER-28; SER-200; SER-210; SER-232; SER-278; SER-302; SER-375; SER-534 AND THR-575</scope>
    <scope>IDENTIFICATION BY MASS SPECTROMETRY [LARGE SCALE ANALYSIS]</scope>
    <source>
        <tissue>Cervix carcinoma</tissue>
        <tissue>Erythroleukemia</tissue>
    </source>
</reference>
<reference key="23">
    <citation type="journal article" date="2014" name="J. Proteomics">
        <title>An enzyme assisted RP-RPLC approach for in-depth analysis of human liver phosphoproteome.</title>
        <authorList>
            <person name="Bian Y."/>
            <person name="Song C."/>
            <person name="Cheng K."/>
            <person name="Dong M."/>
            <person name="Wang F."/>
            <person name="Huang J."/>
            <person name="Sun D."/>
            <person name="Wang L."/>
            <person name="Ye M."/>
            <person name="Zou H."/>
        </authorList>
    </citation>
    <scope>PHOSPHORYLATION [LARGE SCALE ANALYSIS] AT THR-20; SER-23 AND THR-575</scope>
    <scope>IDENTIFICATION BY MASS SPECTROMETRY [LARGE SCALE ANALYSIS]</scope>
    <source>
        <tissue>Liver</tissue>
    </source>
</reference>
<reference key="24">
    <citation type="journal article" date="2014" name="Mol. Cell. Proteomics">
        <title>Immunoaffinity enrichment and mass spectrometry analysis of protein methylation.</title>
        <authorList>
            <person name="Guo A."/>
            <person name="Gu H."/>
            <person name="Zhou J."/>
            <person name="Mulhern D."/>
            <person name="Wang Y."/>
            <person name="Lee K.A."/>
            <person name="Yang V."/>
            <person name="Aguiar M."/>
            <person name="Kornhauser J."/>
            <person name="Jia X."/>
            <person name="Ren J."/>
            <person name="Beausoleil S.A."/>
            <person name="Silva J.C."/>
            <person name="Vemulapalli V."/>
            <person name="Bedford M.T."/>
            <person name="Comb M.J."/>
        </authorList>
    </citation>
    <scope>METHYLATION [LARGE SCALE ANALYSIS] AT ARG-14</scope>
    <scope>IDENTIFICATION BY MASS SPECTROMETRY [LARGE SCALE ANALYSIS]</scope>
    <source>
        <tissue>Colon carcinoma</tissue>
    </source>
</reference>
<reference key="25">
    <citation type="journal article" date="2014" name="Nat. Struct. Mol. Biol.">
        <title>Uncovering global SUMOylation signaling networks in a site-specific manner.</title>
        <authorList>
            <person name="Hendriks I.A."/>
            <person name="D'Souza R.C."/>
            <person name="Yang B."/>
            <person name="Verlaan-de Vries M."/>
            <person name="Mann M."/>
            <person name="Vertegaal A.C."/>
        </authorList>
    </citation>
    <scope>SUMOYLATION [LARGE SCALE ANALYSIS] AT LYS-102; LYS-241 AND LYS-261</scope>
    <scope>IDENTIFICATION BY MASS SPECTROMETRY [LARGE SCALE ANALYSIS]</scope>
</reference>
<reference key="26">
    <citation type="journal article" date="2014" name="Proc. Natl. Acad. Sci. U.S.A.">
        <title>Mapping of SUMO sites and analysis of SUMOylation changes induced by external stimuli.</title>
        <authorList>
            <person name="Impens F."/>
            <person name="Radoshevich L."/>
            <person name="Cossart P."/>
            <person name="Ribet D."/>
        </authorList>
    </citation>
    <scope>SUMOYLATION [LARGE SCALE ANALYSIS] AT LYS-241</scope>
    <scope>IDENTIFICATION BY MASS SPECTROMETRY [LARGE SCALE ANALYSIS]</scope>
</reference>
<reference key="27">
    <citation type="journal article" date="2015" name="Mol. Cell. Proteomics">
        <title>System-wide analysis of SUMOylation dynamics in response to replication stress reveals novel small ubiquitin-like modified target proteins and acceptor lysines relevant for genome stability.</title>
        <authorList>
            <person name="Xiao Z."/>
            <person name="Chang J.G."/>
            <person name="Hendriks I.A."/>
            <person name="Sigurdsson J.O."/>
            <person name="Olsen J.V."/>
            <person name="Vertegaal A.C."/>
        </authorList>
    </citation>
    <scope>SUMOYLATION [LARGE SCALE ANALYSIS] AT LYS-145; LYS-241 AND LYS-261</scope>
    <scope>IDENTIFICATION BY MASS SPECTROMETRY [LARGE SCALE ANALYSIS]</scope>
</reference>
<reference key="28">
    <citation type="journal article" date="2015" name="PLoS ONE">
        <title>SEPT12/SPAG4/LAMINB1 complexes are required for maintaining the integrity of the nuclear envelope in postmeiotic male germ cells.</title>
        <authorList>
            <person name="Yeh C.H."/>
            <person name="Kuo P.L."/>
            <person name="Wang Y.Y."/>
            <person name="Wu Y.Y."/>
            <person name="Chen M.F."/>
            <person name="Lin D.Y."/>
            <person name="Lai T.H."/>
            <person name="Chiang H.S."/>
            <person name="Lin Y.H."/>
        </authorList>
    </citation>
    <scope>INTERACTION WITH SPAG4 AND SEPT12</scope>
</reference>
<reference key="29">
    <citation type="journal article" date="2017" name="Nat. Struct. Mol. Biol.">
        <title>Site-specific mapping of the human SUMO proteome reveals co-modification with phosphorylation.</title>
        <authorList>
            <person name="Hendriks I.A."/>
            <person name="Lyon D."/>
            <person name="Young C."/>
            <person name="Jensen L.J."/>
            <person name="Vertegaal A.C."/>
            <person name="Nielsen M.L."/>
        </authorList>
    </citation>
    <scope>SUMOYLATION [LARGE SCALE ANALYSIS] AT LYS-102; LYS-123; LYS-145; LYS-157; LYS-181; LYS-241; LYS-261; LYS-271; LYS-312; LYS-330; LYS-532 AND LYS-547</scope>
    <scope>IDENTIFICATION BY MASS SPECTROMETRY [LARGE SCALE ANALYSIS]</scope>
</reference>
<reference evidence="24 25" key="30">
    <citation type="journal article" date="2012" name="FEBS Lett.">
        <title>Crystal structures of the coil 2B fragment and the globular tail domain of human lamin B1.</title>
        <authorList>
            <person name="Ruan J."/>
            <person name="Xu C."/>
            <person name="Bian C."/>
            <person name="Lam R."/>
            <person name="Wang J.P."/>
            <person name="Kania J."/>
            <person name="Min J."/>
            <person name="Zang J."/>
        </authorList>
    </citation>
    <scope>X-RAY CRYSTALLOGRAPHY (2.4 ANGSTROMS) OF 311-388</scope>
    <scope>X-RAY CRYSTALLOGRAPHY (2.0 ANGSTROMS) OF 428-550</scope>
    <scope>DISULFIDE BOND</scope>
    <scope>SUBUNIT</scope>
</reference>
<reference evidence="26" key="31">
    <citation type="journal article" date="2015" name="Nat. Struct. Mol. Biol.">
        <title>The active site of O-GlcNAc transferase imposes constraints on substrate sequence.</title>
        <authorList>
            <person name="Pathak S."/>
            <person name="Alonso J."/>
            <person name="Schimpl M."/>
            <person name="Rafie K."/>
            <person name="Blair D.E."/>
            <person name="Borodkin V.S."/>
            <person name="Albarbarawi O."/>
            <person name="van Aalten D.M.F."/>
        </authorList>
    </citation>
    <scope>X-RAY CRYSTALLOGRAPHY (2.40 ANGSTROMS) OF 389-401 IN COMPLEX WITH OGT</scope>
    <scope>GLYCOSYLATION AT THR-399</scope>
</reference>
<reference evidence="27" key="32">
    <citation type="journal article" date="2017" name="Nat. Commun.">
        <title>Structural insights into the substrate binding adaptability and specificity of human O-GlcNAcase.</title>
        <authorList>
            <person name="Li B."/>
            <person name="Li H."/>
            <person name="Hu C.W."/>
            <person name="Jiang J."/>
        </authorList>
    </citation>
    <scope>X-RAY CRYSTALLOGRAPHY (2.90 ANGSTROMS) OF 389-401 IN COMPLEX WITH OGA</scope>
    <scope>GLYCOSYLATION AT THR-399</scope>
    <scope>DEGLYCOSYLATION AT THR-399</scope>
</reference>
<reference evidence="28" key="33">
    <citation type="journal article" date="2021" name="Biochem. Biophys. Res. Commun.">
        <title>Beta-strand-mediated dimeric formation of the Ig-like domains of human lamin A/C and B1.</title>
        <authorList>
            <person name="Ahn J."/>
            <person name="Lee J."/>
            <person name="Jeong S."/>
            <person name="Kang S.M."/>
            <person name="Park B.J."/>
            <person name="Ha N.C."/>
        </authorList>
    </citation>
    <scope>X-RAY CRYSTALLOGRAPHY (3.60 ANGSTROMS) OF 407-553</scope>
    <scope>SUBUNIT</scope>
</reference>
<reference key="34">
    <citation type="journal article" date="2014" name="Nat. Neurosci.">
        <title>Mutations in the matrin 3 gene cause familial amyotrophic lateral sclerosis.</title>
        <authorList>
            <person name="Johnson J.O."/>
            <person name="Pioro E.P."/>
            <person name="Boehringer A."/>
            <person name="Chia R."/>
            <person name="Feit H."/>
            <person name="Renton A.E."/>
            <person name="Pliner H.A."/>
            <person name="Abramzon Y."/>
            <person name="Marangi G."/>
            <person name="Winborn B.J."/>
            <person name="Gibbs J.R."/>
            <person name="Nalls M.A."/>
            <person name="Morgan S."/>
            <person name="Shoai M."/>
            <person name="Hardy J."/>
            <person name="Pittman A."/>
            <person name="Orrell R.W."/>
            <person name="Malaspina A."/>
            <person name="Sidle K.C."/>
            <person name="Fratta P."/>
            <person name="Harms M.B."/>
            <person name="Baloh R.H."/>
            <person name="Pestronk A."/>
            <person name="Weihl C.C."/>
            <person name="Rogaeva E."/>
            <person name="Zinman L."/>
            <person name="Drory V.E."/>
            <person name="Borghero G."/>
            <person name="Mora G."/>
            <person name="Calvo A."/>
            <person name="Rothstein J.D."/>
            <person name="Drepper C."/>
            <person name="Sendtner M."/>
            <person name="Singleton A.B."/>
            <person name="Taylor J.P."/>
            <person name="Cookson M.R."/>
            <person name="Restagno G."/>
            <person name="Sabatelli M."/>
            <person name="Bowser R."/>
            <person name="Chio A."/>
            <person name="Traynor B.J."/>
        </authorList>
    </citation>
    <scope>VARIANT VAL-436</scope>
</reference>
<reference key="35">
    <citation type="journal article" date="2017" name="J. Neurol. Sci.">
        <title>LMNB1 mutation causes cerebellar involvement and a genome instability defect.</title>
        <authorList>
            <person name="Pedroso J.L."/>
            <person name="Munford V."/>
            <person name="Bastos A.U."/>
            <person name="Castro L.P."/>
            <person name="Marussi V.H.R."/>
            <person name="Silva G.S."/>
            <person name="Arita J.H."/>
            <person name="Menck C.F.M."/>
            <person name="Barsottini O.G."/>
        </authorList>
    </citation>
    <scope>VARIANT ADLDTY TRP-29</scope>
</reference>
<reference key="36">
    <citation type="journal article" date="2020" name="Am. J. Hum. Genet.">
        <title>De Novo Variants in LMNB1 Cause Pronounced Syndromic Microcephaly and Disruption of Nuclear Envelope Integrity.</title>
        <authorList>
            <person name="Cristofoli F."/>
            <person name="Moss T."/>
            <person name="Moore H.W."/>
            <person name="Devriendt K."/>
            <person name="Flanagan-Steet H."/>
            <person name="May M."/>
            <person name="Jones J."/>
            <person name="Roelens F."/>
            <person name="Fons C."/>
            <person name="Fernandez A."/>
            <person name="Martorell L."/>
            <person name="Selicorni A."/>
            <person name="Maitz S."/>
            <person name="Vitiello G."/>
            <person name="Van der Hoeven G."/>
            <person name="Skinner S.A."/>
            <person name="Bollen M."/>
            <person name="Vermeesch J.R."/>
            <person name="Steet R."/>
            <person name="Van Esch H."/>
        </authorList>
    </citation>
    <scope>INVOLVEMENT IN MCPH26</scope>
    <scope>VARIANTS MCPH26 GLU-33; TRP-42 AND GLY-152</scope>
    <scope>VARIANT THR-33</scope>
    <scope>CHARACTERIZATION OF VARIANTS MCPH26 GLU-33; TRP-42 AND GLY-152</scope>
    <scope>CHARACTERIZATION OF VARIANT ADLDTY TRP-29</scope>
    <scope>CHARACTERIZATION OF VARIANT THR-33</scope>
    <scope>SUBCELLULAR LOCATION</scope>
    <scope>FUNCTION</scope>
</reference>
<reference key="37">
    <citation type="journal article" date="2021" name="Genet. Med.">
        <title>Heterozygous lamin B1 and lamin B2 variants cause primary microcephaly and define a novel laminopathy.</title>
        <authorList>
            <consortium name="Genomics England Research Consortium"/>
            <person name="Parry D.A."/>
            <person name="Martin C.A."/>
            <person name="Greene P."/>
            <person name="Marsh J.A."/>
            <person name="Blyth M."/>
            <person name="Cox H."/>
            <person name="Donnelly D."/>
            <person name="Greenhalgh L."/>
            <person name="Greville-Heygate S."/>
            <person name="Harrison V."/>
            <person name="Lachlan K."/>
            <person name="McKenna C."/>
            <person name="Quigley A.J."/>
            <person name="Rea G."/>
            <person name="Robertson L."/>
            <person name="Suri M."/>
            <person name="Jackson A.P."/>
        </authorList>
    </citation>
    <scope>INVOLVEMENT IN MCPH26</scope>
    <scope>VARIANTS MCPH26 LYS-33 DEL AND PRO-90</scope>
    <scope>CHARACTERIZATION OF VARIANTS MCPH26 GLU-33; LYS-33 DEL AND PRO-90</scope>
</reference>
<reference key="38">
    <citation type="journal article" date="2024" name="Ann. Neurol.">
        <title>Structural Variants at the LMNB1 Locus: Deciphering Pathomechanisms in Autosomal Dominant Adult-Onset Demyelinating Leukodystrophy.</title>
        <authorList>
            <person name="Dimartino P."/>
            <person name="Zadorozhna M."/>
            <person name="Yumiceba V."/>
            <person name="Basile A."/>
            <person name="Cani I."/>
            <person name="Melo U.S."/>
            <person name="Henck J."/>
            <person name="Breur M."/>
            <person name="Tonon C."/>
            <person name="Lodi R."/>
            <person name="Brusco A."/>
            <person name="Pippucci T."/>
            <person name="Koufi F.D."/>
            <person name="Boschetti E."/>
            <person name="Ramazzotti G."/>
            <person name="Manzoli L."/>
            <person name="Ratti S."/>
            <person name="Pinto E Vairo F."/>
            <person name="Delatycki M.B."/>
            <person name="Vaula G."/>
            <person name="Cortelli P."/>
            <person name="Bugiani M."/>
            <person name="Spielmann M."/>
            <person name="Giorgio E."/>
        </authorList>
    </citation>
    <scope>INVOLVEMENT IN ADLDAT AND ADLDTY</scope>
</reference>
<feature type="initiator methionine" description="Removed" evidence="21 32 35 37">
    <location>
        <position position="1"/>
    </location>
</feature>
<feature type="chain" id="PRO_0000063816" description="Lamin-B1">
    <location>
        <begin position="2"/>
        <end position="583"/>
    </location>
</feature>
<feature type="propeptide" id="PRO_0000393945" description="Removed in mature form" evidence="22">
    <location>
        <begin position="584"/>
        <end position="586"/>
    </location>
</feature>
<feature type="domain" description="IF rod" evidence="7">
    <location>
        <begin position="32"/>
        <end position="388"/>
    </location>
</feature>
<feature type="domain" description="LTD" evidence="6">
    <location>
        <begin position="430"/>
        <end position="546"/>
    </location>
</feature>
<feature type="region of interest" description="Disordered" evidence="8">
    <location>
        <begin position="1"/>
        <end position="31"/>
    </location>
</feature>
<feature type="region of interest" description="Head">
    <location>
        <begin position="2"/>
        <end position="34"/>
    </location>
</feature>
<feature type="region of interest" description="Coil 1A">
    <location>
        <begin position="35"/>
        <end position="69"/>
    </location>
</feature>
<feature type="region of interest" description="Linker 1">
    <location>
        <begin position="70"/>
        <end position="81"/>
    </location>
</feature>
<feature type="region of interest" description="Coil 1B">
    <location>
        <begin position="82"/>
        <end position="215"/>
    </location>
</feature>
<feature type="region of interest" description="Linker 2">
    <location>
        <begin position="216"/>
        <end position="243"/>
    </location>
</feature>
<feature type="region of interest" description="Coil 2">
    <location>
        <begin position="244"/>
        <end position="386"/>
    </location>
</feature>
<feature type="region of interest" description="Tail">
    <location>
        <begin position="387"/>
        <end position="586"/>
    </location>
</feature>
<feature type="region of interest" description="Disordered" evidence="8">
    <location>
        <begin position="388"/>
        <end position="432"/>
    </location>
</feature>
<feature type="short sequence motif" description="Nuclear localization signal" evidence="5">
    <location>
        <begin position="415"/>
        <end position="420"/>
    </location>
</feature>
<feature type="compositionally biased region" description="Low complexity" evidence="8">
    <location>
        <begin position="390"/>
        <end position="409"/>
    </location>
</feature>
<feature type="modified residue" description="N-acetylalanine" evidence="21 32 35 37">
    <location>
        <position position="2"/>
    </location>
</feature>
<feature type="modified residue" description="Phosphothreonine" evidence="35">
    <location>
        <position position="3"/>
    </location>
</feature>
<feature type="modified residue" description="Phosphothreonine" evidence="35 38">
    <location>
        <position position="5"/>
    </location>
</feature>
<feature type="modified residue" description="Omega-N-methylarginine" evidence="39">
    <location>
        <position position="14"/>
    </location>
</feature>
<feature type="modified residue" description="Phosphothreonine" evidence="29 31 38 40">
    <location>
        <position position="20"/>
    </location>
</feature>
<feature type="modified residue" description="Phosphoserine" evidence="29 31 35 36 38 40">
    <location>
        <position position="23"/>
    </location>
</feature>
<feature type="modified residue" description="Phosphothreonine" evidence="38">
    <location>
        <position position="25"/>
    </location>
</feature>
<feature type="modified residue" description="Phosphoserine" evidence="38">
    <location>
        <position position="28"/>
    </location>
</feature>
<feature type="modified residue" description="N6-acetyllysine" evidence="2">
    <location>
        <position position="111"/>
    </location>
</feature>
<feature type="modified residue" description="Phosphoserine" evidence="4">
    <location>
        <position position="126"/>
    </location>
</feature>
<feature type="modified residue" description="N6-acetyllysine; alternate" evidence="33">
    <location>
        <position position="157"/>
    </location>
</feature>
<feature type="modified residue" description="Phosphoserine" evidence="4">
    <location>
        <position position="158"/>
    </location>
</feature>
<feature type="modified residue" description="Phosphoserine" evidence="38">
    <location>
        <position position="200"/>
    </location>
</feature>
<feature type="modified residue" description="Phosphoserine" evidence="36 38">
    <location>
        <position position="210"/>
    </location>
</feature>
<feature type="modified residue" description="Phosphoserine" evidence="38">
    <location>
        <position position="232"/>
    </location>
</feature>
<feature type="modified residue" description="N6-acetyllysine; alternate" evidence="33">
    <location>
        <position position="271"/>
    </location>
</feature>
<feature type="modified residue" description="Phosphoserine" evidence="38">
    <location>
        <position position="278"/>
    </location>
</feature>
<feature type="modified residue" description="Phosphoserine" evidence="38">
    <location>
        <position position="302"/>
    </location>
</feature>
<feature type="modified residue" description="N6-acetyllysine; alternate" evidence="2">
    <location>
        <position position="330"/>
    </location>
</feature>
<feature type="modified residue" description="Phosphoserine" evidence="34 35 38">
    <location>
        <position position="375"/>
    </location>
</feature>
<feature type="modified residue" description="Phosphoserine" evidence="1">
    <location>
        <position position="393"/>
    </location>
</feature>
<feature type="modified residue" description="Omega-N-methylarginine" evidence="3">
    <location>
        <position position="413"/>
    </location>
</feature>
<feature type="modified residue" description="N6-acetyllysine" evidence="33">
    <location>
        <position position="483"/>
    </location>
</feature>
<feature type="modified residue" description="Phosphoserine" evidence="38">
    <location>
        <position position="534"/>
    </location>
</feature>
<feature type="modified residue" description="Phosphothreonine" evidence="30 31 35 36 38 40">
    <location>
        <position position="575"/>
    </location>
</feature>
<feature type="modified residue" description="Cysteine methyl ester" evidence="23">
    <location>
        <position position="583"/>
    </location>
</feature>
<feature type="lipid moiety-binding region" description="S-farnesyl cysteine" evidence="14">
    <location>
        <position position="583"/>
    </location>
</feature>
<feature type="glycosylation site" description="O-linked (GlcNAc) threonine" evidence="13 16">
    <location>
        <position position="399"/>
    </location>
</feature>
<feature type="disulfide bond" description="Interchain" evidence="10">
    <location>
        <position position="317"/>
    </location>
</feature>
<feature type="cross-link" description="Glycyl lysine isopeptide (Lys-Gly) (interchain with G-Cter in SUMO2)" evidence="42 44">
    <location>
        <position position="102"/>
    </location>
</feature>
<feature type="cross-link" description="Glycyl lysine isopeptide (Lys-Gly) (interchain with G-Cter in SUMO2)" evidence="44">
    <location>
        <position position="123"/>
    </location>
</feature>
<feature type="cross-link" description="Glycyl lysine isopeptide (Lys-Gly) (interchain with G-Cter in SUMO2)" evidence="43 44">
    <location>
        <position position="145"/>
    </location>
</feature>
<feature type="cross-link" description="Glycyl lysine isopeptide (Lys-Gly) (interchain with G-Cter in SUMO2); alternate" evidence="44">
    <location>
        <position position="157"/>
    </location>
</feature>
<feature type="cross-link" description="Glycyl lysine isopeptide (Lys-Gly) (interchain with G-Cter in SUMO2)" evidence="44">
    <location>
        <position position="181"/>
    </location>
</feature>
<feature type="cross-link" description="Glycyl lysine isopeptide (Lys-Gly) (interchain with G-Cter in SUMO2)" evidence="41 42 43 44">
    <location>
        <position position="241"/>
    </location>
</feature>
<feature type="cross-link" description="Glycyl lysine isopeptide (Lys-Gly) (interchain with G-Cter in SUMO2)" evidence="42 43 44">
    <location>
        <position position="261"/>
    </location>
</feature>
<feature type="cross-link" description="Glycyl lysine isopeptide (Lys-Gly) (interchain with G-Cter in SUMO2); alternate" evidence="44">
    <location>
        <position position="271"/>
    </location>
</feature>
<feature type="cross-link" description="Glycyl lysine isopeptide (Lys-Gly) (interchain with G-Cter in SUMO2)" evidence="44">
    <location>
        <position position="312"/>
    </location>
</feature>
<feature type="cross-link" description="Glycyl lysine isopeptide (Lys-Gly) (interchain with G-Cter in SUMO2); alternate" evidence="44">
    <location>
        <position position="330"/>
    </location>
</feature>
<feature type="cross-link" description="Glycyl lysine isopeptide (Lys-Gly) (interchain with G-Cter in SUMO2)" evidence="44">
    <location>
        <position position="532"/>
    </location>
</feature>
<feature type="cross-link" description="Glycyl lysine isopeptide (Lys-Gly) (interchain with G-Cter in SUMO2)" evidence="44">
    <location>
        <position position="547"/>
    </location>
</feature>
<feature type="sequence variant" id="VAR_085497" description="In ADLDTY; uncertain significance; no effect on localization to nuclear lamina; dbSNP:rs1295707923." evidence="15 17">
    <original>R</original>
    <variation>W</variation>
    <location>
        <position position="29"/>
    </location>
</feature>
<feature type="sequence variant" id="VAR_085498" description="In MCPH26; decreased localization to nuclear lamina; increased aggregation; changed nuclear envelope organization; dbSNP:rs1750497172." evidence="17 18">
    <original>K</original>
    <variation>E</variation>
    <location>
        <position position="33"/>
    </location>
</feature>
<feature type="sequence variant" id="VAR_085499" description="No effect on localization to nuclear lamina; dbSNP:rs1303994586." evidence="17">
    <original>K</original>
    <variation>T</variation>
    <location>
        <position position="33"/>
    </location>
</feature>
<feature type="sequence variant" id="VAR_085500" description="In MCPH26; increased aggregation; changed nuclear envelope organization." evidence="18">
    <location>
        <position position="33"/>
    </location>
</feature>
<feature type="sequence variant" id="VAR_085501" description="In MCPH26; decreased localization to nuclear lamina; changed nuclear envelope organization; increased aggregation; dbSNP:rs1245844735." evidence="17">
    <original>R</original>
    <variation>W</variation>
    <location>
        <position position="42"/>
    </location>
</feature>
<feature type="sequence variant" id="VAR_085502" description="In MCPH26; increased aggregation; changed nuclear envelope organization; dbSNP:rs1750506249." evidence="18">
    <original>R</original>
    <variation>P</variation>
    <location>
        <position position="90"/>
    </location>
</feature>
<feature type="sequence variant" id="VAR_085503" description="In MCPH26; decreased protein abundance; changed localization to nuclear lamina; changed nuclear envelope organization; dbSNP:rs935132421." evidence="17">
    <original>A</original>
    <variation>G</variation>
    <location>
        <position position="152"/>
    </location>
</feature>
<feature type="sequence variant" id="VAR_071077" description="Found in a family with amyotrophic lateral sclerosis carrying a probable causative mutation in MATR3; uncertain significance; dbSNP:rs1380634377." evidence="11">
    <original>A</original>
    <variation>V</variation>
    <location>
        <position position="436"/>
    </location>
</feature>
<feature type="sequence variant" id="VAR_031646" description="In dbSNP:rs36105360.">
    <original>A</original>
    <variation>V</variation>
    <location>
        <position position="501"/>
    </location>
</feature>
<feature type="sequence conflict" description="In Ref. 5; AAH12295." evidence="22" ref="5">
    <original>E</original>
    <variation>Q</variation>
    <location>
        <position position="382"/>
    </location>
</feature>
<feature type="helix" evidence="45">
    <location>
        <begin position="315"/>
        <end position="381"/>
    </location>
</feature>
<feature type="strand" evidence="46">
    <location>
        <begin position="432"/>
        <end position="447"/>
    </location>
</feature>
<feature type="strand" evidence="46">
    <location>
        <begin position="451"/>
        <end position="458"/>
    </location>
</feature>
<feature type="strand" evidence="46">
    <location>
        <begin position="460"/>
        <end position="462"/>
    </location>
</feature>
<feature type="strand" evidence="46">
    <location>
        <begin position="470"/>
        <end position="475"/>
    </location>
</feature>
<feature type="strand" evidence="46">
    <location>
        <begin position="478"/>
        <end position="483"/>
    </location>
</feature>
<feature type="strand" evidence="46">
    <location>
        <begin position="495"/>
        <end position="500"/>
    </location>
</feature>
<feature type="turn" evidence="46">
    <location>
        <begin position="509"/>
        <end position="511"/>
    </location>
</feature>
<feature type="strand" evidence="46">
    <location>
        <begin position="512"/>
        <end position="515"/>
    </location>
</feature>
<feature type="strand" evidence="46">
    <location>
        <begin position="523"/>
        <end position="525"/>
    </location>
</feature>
<feature type="strand" evidence="46">
    <location>
        <begin position="527"/>
        <end position="532"/>
    </location>
</feature>
<feature type="strand" evidence="46">
    <location>
        <begin position="538"/>
        <end position="546"/>
    </location>
</feature>
<organism>
    <name type="scientific">Homo sapiens</name>
    <name type="common">Human</name>
    <dbReference type="NCBI Taxonomy" id="9606"/>
    <lineage>
        <taxon>Eukaryota</taxon>
        <taxon>Metazoa</taxon>
        <taxon>Chordata</taxon>
        <taxon>Craniata</taxon>
        <taxon>Vertebrata</taxon>
        <taxon>Euteleostomi</taxon>
        <taxon>Mammalia</taxon>
        <taxon>Eutheria</taxon>
        <taxon>Euarchontoglires</taxon>
        <taxon>Primates</taxon>
        <taxon>Haplorrhini</taxon>
        <taxon>Catarrhini</taxon>
        <taxon>Hominidae</taxon>
        <taxon>Homo</taxon>
    </lineage>
</organism>
<sequence length="586" mass="66408">MATATPVPPRMGSRAGGPTTPLSPTRLSRLQEKEELRELNDRLAVYIDKVRSLETENSALQLQVTEREEVRGRELTGLKALYETELADARRALDDTARERAKLQIELGKCKAEHDQLLLNYAKKESDLNGAQIKLREYEAALNSKDAALATALGDKKSLEGDLEDLKDQIAQLEASLAAAKKQLADETLLKVDLENRCQSLTEDLEFRKSMYEEEINETRRKHETRLVEVDSGRQIEYEYKLAQALHEMREQHDAQVRLYKEELEQTYHAKLENARLSSEMNTSTVNSAREELMESRMRIESLSSQLSNLQKESRACLERIQELEDLLAKEKDNSRRMLTDKEREMAEIRDQMQQQLNDYEQLLDVKLALDMEISAYRKLLEGEEERLKLSPSPSSRVTVSRASSSRSVRTTRGKRKRVDVEESEASSSVSISHSASATGNVCIEEIDVDGKFIRLKNTSEQDQPMGGWEMIRKIGDTSVSYKYTSRYVLKAGQTVTIWAANAGVTASPPTDLIWKNQNSWGTGEDVKVILKNSQGEEVAQRSTVFKTTIPEEEEEEEEAAGVVVEEELFHQQGTPRASNRSCAIM</sequence>